<protein>
    <recommendedName>
        <fullName>Mediator of RNA polymerase II transcription subunit 4</fullName>
    </recommendedName>
    <alternativeName>
        <fullName>Mediator complex subunit 4</fullName>
    </alternativeName>
</protein>
<feature type="initiator methionine" description="Removed" evidence="15">
    <location>
        <position position="1"/>
    </location>
</feature>
<feature type="chain" id="PRO_0000096386" description="Mediator of RNA polymerase II transcription subunit 4">
    <location>
        <begin position="2"/>
        <end position="284"/>
    </location>
</feature>
<feature type="region of interest" description="Disordered" evidence="1">
    <location>
        <begin position="205"/>
        <end position="284"/>
    </location>
</feature>
<feature type="compositionally biased region" description="Basic and acidic residues" evidence="1">
    <location>
        <begin position="225"/>
        <end position="238"/>
    </location>
</feature>
<feature type="compositionally biased region" description="Basic and acidic residues" evidence="1">
    <location>
        <begin position="248"/>
        <end position="265"/>
    </location>
</feature>
<feature type="compositionally biased region" description="Acidic residues" evidence="1">
    <location>
        <begin position="266"/>
        <end position="284"/>
    </location>
</feature>
<feature type="modified residue" description="N-acetylserine" evidence="15">
    <location>
        <position position="2"/>
    </location>
</feature>
<feature type="modified residue" description="Phosphothreonine; by KIN28" evidence="5 11 12 14">
    <location>
        <position position="237"/>
    </location>
</feature>
<feature type="modified residue" description="Phosphoserine" evidence="11 13">
    <location>
        <position position="242"/>
    </location>
</feature>
<comment type="function">
    <text evidence="2 7 8">Component of the Mediator complex, a coactivator involved in the regulated transcription of nearly all RNA polymerase II-dependent genes. Mediator functions as a bridge to convey information from gene-specific regulatory proteins to the basal RNA polymerase II transcription machinery. The Mediator complex, having a compact conformation in its free form, is recruited to promoters by direct interactions with regulatory proteins and serves for the assembly of a functional preinitiation complex with RNA polymerase II and the general transcription factors. The Mediator complex unfolds to an extended conformation and partially surrounds RNA polymerase II, specifically interacting with the unphosphorylated form of the C-terminal domain (CTD) of RNA polymerase II. The Mediator complex dissociates from the RNA polymerase II holoenzyme and stays at the promoter when transcriptional elongation begins.</text>
</comment>
<comment type="subunit">
    <text evidence="2 6 9">Component of the Mediator complex, which is composed of at least 21 subunits that form three structurally distinct submodules. The Mediator head module contains MED6, MED8, MED11, SRB4/MED17, SRB5/MED18, ROX3/MED19, SRB2/MED20 and SRB6/MED22, the middle module contains MED1, MED4, NUT1/MED5, MED7, CSE2/MED9, NUT2/MED10, SRB7/MED21 and SOH1/MED31, and the tail module contains MED2, PGD1/MED3, RGR1/MED14, GAL11/MED15 and SIN4/MED16. The head and the middle modules interact directly with RNA polymerase II, whereas the elongated tail module interacts with gene-specific regulatory proteins. MED4 interacts directly with MED1, MED7 and SRB7/MED21.</text>
</comment>
<comment type="interaction">
    <interactant intactId="EBI-31503">
        <id>Q12343</id>
    </interactant>
    <interactant intactId="EBI-5174">
        <id>P33308</id>
        <label>CSE2</label>
    </interactant>
    <organismsDiffer>false</organismsDiffer>
    <experiments>3</experiments>
</comment>
<comment type="interaction">
    <interactant intactId="EBI-31503">
        <id>Q12343</id>
    </interactant>
    <interactant intactId="EBI-32854">
        <id>Q12321</id>
        <label>MED1</label>
    </interactant>
    <organismsDiffer>false</organismsDiffer>
    <experiments>3</experiments>
</comment>
<comment type="interaction">
    <interactant intactId="EBI-31503">
        <id>Q12343</id>
    </interactant>
    <interactant intactId="EBI-10674">
        <id>Q08278</id>
        <label>MED7</label>
    </interactant>
    <organismsDiffer>false</organismsDiffer>
    <experiments>5</experiments>
</comment>
<comment type="interaction">
    <interactant intactId="EBI-31503">
        <id>Q12343</id>
    </interactant>
    <interactant intactId="EBI-12414">
        <id>Q06213</id>
        <label>NUT2</label>
    </interactant>
    <organismsDiffer>false</organismsDiffer>
    <experiments>3</experiments>
</comment>
<comment type="interaction">
    <interactant intactId="EBI-31503">
        <id>Q12343</id>
    </interactant>
    <interactant intactId="EBI-18046">
        <id>P47822</id>
        <label>SRB7</label>
    </interactant>
    <organismsDiffer>false</organismsDiffer>
    <experiments>5</experiments>
</comment>
<comment type="subcellular location">
    <subcellularLocation>
        <location evidence="3">Nucleus</location>
    </subcellularLocation>
</comment>
<comment type="miscellaneous">
    <text evidence="4">Present with 1617 molecules/cell in log phase SD medium.</text>
</comment>
<comment type="similarity">
    <text evidence="10">Belongs to the Mediator complex subunit 4 family.</text>
</comment>
<evidence type="ECO:0000256" key="1">
    <source>
        <dbReference type="SAM" id="MobiDB-lite"/>
    </source>
</evidence>
<evidence type="ECO:0000269" key="2">
    <source>
    </source>
</evidence>
<evidence type="ECO:0000269" key="3">
    <source>
    </source>
</evidence>
<evidence type="ECO:0000269" key="4">
    <source>
    </source>
</evidence>
<evidence type="ECO:0000269" key="5">
    <source>
    </source>
</evidence>
<evidence type="ECO:0000269" key="6">
    <source>
    </source>
</evidence>
<evidence type="ECO:0000269" key="7">
    <source>
    </source>
</evidence>
<evidence type="ECO:0000269" key="8">
    <source>
    </source>
</evidence>
<evidence type="ECO:0000269" key="9">
    <source>
    </source>
</evidence>
<evidence type="ECO:0000305" key="10"/>
<evidence type="ECO:0007744" key="11">
    <source>
    </source>
</evidence>
<evidence type="ECO:0007744" key="12">
    <source>
    </source>
</evidence>
<evidence type="ECO:0007744" key="13">
    <source>
    </source>
</evidence>
<evidence type="ECO:0007744" key="14">
    <source>
    </source>
</evidence>
<evidence type="ECO:0007744" key="15">
    <source>
    </source>
</evidence>
<reference key="1">
    <citation type="journal article" date="1996" name="Yeast">
        <title>Analysis of a 22,956 bp region on the right arm of Saccharomyces cerevisiae chromosome XV.</title>
        <authorList>
            <person name="Madania A."/>
            <person name="Poch O."/>
            <person name="Tarassov I.A."/>
            <person name="Winsor B."/>
            <person name="Martin R.P."/>
        </authorList>
    </citation>
    <scope>NUCLEOTIDE SEQUENCE [GENOMIC DNA]</scope>
    <source>
        <strain>S288c / FY1678</strain>
    </source>
</reference>
<reference key="2">
    <citation type="journal article" date="1997" name="Nature">
        <title>The nucleotide sequence of Saccharomyces cerevisiae chromosome XV.</title>
        <authorList>
            <person name="Dujon B."/>
            <person name="Albermann K."/>
            <person name="Aldea M."/>
            <person name="Alexandraki D."/>
            <person name="Ansorge W."/>
            <person name="Arino J."/>
            <person name="Benes V."/>
            <person name="Bohn C."/>
            <person name="Bolotin-Fukuhara M."/>
            <person name="Bordonne R."/>
            <person name="Boyer J."/>
            <person name="Camasses A."/>
            <person name="Casamayor A."/>
            <person name="Casas C."/>
            <person name="Cheret G."/>
            <person name="Cziepluch C."/>
            <person name="Daignan-Fornier B."/>
            <person name="Dang V.-D."/>
            <person name="de Haan M."/>
            <person name="Delius H."/>
            <person name="Durand P."/>
            <person name="Fairhead C."/>
            <person name="Feldmann H."/>
            <person name="Gaillon L."/>
            <person name="Galisson F."/>
            <person name="Gamo F.-J."/>
            <person name="Gancedo C."/>
            <person name="Goffeau A."/>
            <person name="Goulding S.E."/>
            <person name="Grivell L.A."/>
            <person name="Habbig B."/>
            <person name="Hand N.J."/>
            <person name="Hani J."/>
            <person name="Hattenhorst U."/>
            <person name="Hebling U."/>
            <person name="Hernando Y."/>
            <person name="Herrero E."/>
            <person name="Heumann K."/>
            <person name="Hiesel R."/>
            <person name="Hilger F."/>
            <person name="Hofmann B."/>
            <person name="Hollenberg C.P."/>
            <person name="Hughes B."/>
            <person name="Jauniaux J.-C."/>
            <person name="Kalogeropoulos A."/>
            <person name="Katsoulou C."/>
            <person name="Kordes E."/>
            <person name="Lafuente M.J."/>
            <person name="Landt O."/>
            <person name="Louis E.J."/>
            <person name="Maarse A.C."/>
            <person name="Madania A."/>
            <person name="Mannhaupt G."/>
            <person name="Marck C."/>
            <person name="Martin R.P."/>
            <person name="Mewes H.-W."/>
            <person name="Michaux G."/>
            <person name="Paces V."/>
            <person name="Parle-McDermott A.G."/>
            <person name="Pearson B.M."/>
            <person name="Perrin A."/>
            <person name="Pettersson B."/>
            <person name="Poch O."/>
            <person name="Pohl T.M."/>
            <person name="Poirey R."/>
            <person name="Portetelle D."/>
            <person name="Pujol A."/>
            <person name="Purnelle B."/>
            <person name="Ramezani Rad M."/>
            <person name="Rechmann S."/>
            <person name="Schwager C."/>
            <person name="Schweizer M."/>
            <person name="Sor F."/>
            <person name="Sterky F."/>
            <person name="Tarassov I.A."/>
            <person name="Teodoru C."/>
            <person name="Tettelin H."/>
            <person name="Thierry A."/>
            <person name="Tobiasch E."/>
            <person name="Tzermia M."/>
            <person name="Uhlen M."/>
            <person name="Unseld M."/>
            <person name="Valens M."/>
            <person name="Vandenbol M."/>
            <person name="Vetter I."/>
            <person name="Vlcek C."/>
            <person name="Voet M."/>
            <person name="Volckaert G."/>
            <person name="Voss H."/>
            <person name="Wambutt R."/>
            <person name="Wedler H."/>
            <person name="Wiemann S."/>
            <person name="Winsor B."/>
            <person name="Wolfe K.H."/>
            <person name="Zollner A."/>
            <person name="Zumstein E."/>
            <person name="Kleine K."/>
        </authorList>
    </citation>
    <scope>NUCLEOTIDE SEQUENCE [LARGE SCALE GENOMIC DNA]</scope>
    <source>
        <strain>ATCC 204508 / S288c</strain>
    </source>
</reference>
<reference key="3">
    <citation type="journal article" date="2014" name="G3 (Bethesda)">
        <title>The reference genome sequence of Saccharomyces cerevisiae: Then and now.</title>
        <authorList>
            <person name="Engel S.R."/>
            <person name="Dietrich F.S."/>
            <person name="Fisk D.G."/>
            <person name="Binkley G."/>
            <person name="Balakrishnan R."/>
            <person name="Costanzo M.C."/>
            <person name="Dwight S.S."/>
            <person name="Hitz B.C."/>
            <person name="Karra K."/>
            <person name="Nash R.S."/>
            <person name="Weng S."/>
            <person name="Wong E.D."/>
            <person name="Lloyd P."/>
            <person name="Skrzypek M.S."/>
            <person name="Miyasato S.R."/>
            <person name="Simison M."/>
            <person name="Cherry J.M."/>
        </authorList>
    </citation>
    <scope>GENOME REANNOTATION</scope>
    <source>
        <strain>ATCC 204508 / S288c</strain>
    </source>
</reference>
<reference key="4">
    <citation type="journal article" date="1998" name="Genes Dev.">
        <title>The Med proteins of yeast and their function through the RNA polymerase II carboxy-terminal domain.</title>
        <authorList>
            <person name="Myers L.C."/>
            <person name="Gustafsson C.M."/>
            <person name="Bushnell D.A."/>
            <person name="Lui M."/>
            <person name="Erdjument-Bromage H."/>
            <person name="Tempst P."/>
            <person name="Kornberg R.D."/>
        </authorList>
    </citation>
    <scope>IDENTIFICATION BY MASS SPECTROMETRY</scope>
    <scope>COMPONENT OF MEDIATOR COMPLEX</scope>
</reference>
<reference key="5">
    <citation type="journal article" date="2001" name="J. Biol. Chem.">
        <title>The structural and functional organization of the yeast mediator complex.</title>
        <authorList>
            <person name="Kang J.S."/>
            <person name="Kim S.H."/>
            <person name="Hwang M.S."/>
            <person name="Han S.J."/>
            <person name="Lee Y.C."/>
            <person name="Kim Y.-J."/>
        </authorList>
    </citation>
    <scope>INTERACTION WITH MED1; MED7 AND CSE2</scope>
    <scope>FUNCTION OF THE MEDIATOR COMPLEX</scope>
    <scope>INTERACTION OF THE MEDIATOR COMPLEX WITH RNA POLYMERASE II</scope>
</reference>
<reference key="6">
    <citation type="journal article" date="2003" name="Nature">
        <title>Global analysis of protein localization in budding yeast.</title>
        <authorList>
            <person name="Huh W.-K."/>
            <person name="Falvo J.V."/>
            <person name="Gerke L.C."/>
            <person name="Carroll A.S."/>
            <person name="Howson R.W."/>
            <person name="Weissman J.S."/>
            <person name="O'Shea E.K."/>
        </authorList>
    </citation>
    <scope>SUBCELLULAR LOCATION [LARGE SCALE ANALYSIS]</scope>
</reference>
<reference key="7">
    <citation type="journal article" date="2003" name="Nature">
        <title>Global analysis of protein expression in yeast.</title>
        <authorList>
            <person name="Ghaemmaghami S."/>
            <person name="Huh W.-K."/>
            <person name="Bower K."/>
            <person name="Howson R.W."/>
            <person name="Belle A."/>
            <person name="Dephoure N."/>
            <person name="O'Shea E.K."/>
            <person name="Weissman J.S."/>
        </authorList>
    </citation>
    <scope>LEVEL OF PROTEIN EXPRESSION [LARGE SCALE ANALYSIS]</scope>
</reference>
<reference key="8">
    <citation type="journal article" date="2004" name="J. Biol. Chem.">
        <title>Mutual targeting of mediator and the TFIIH kinase Kin28.</title>
        <authorList>
            <person name="Guidi B.W."/>
            <person name="Bjornsdottir G."/>
            <person name="Hopkins D.C."/>
            <person name="Lacomis L."/>
            <person name="Erdjument-Bromage H."/>
            <person name="Tempst P."/>
            <person name="Myers L.C."/>
        </authorList>
    </citation>
    <scope>PHOSPHORYLATION AT THR-237</scope>
</reference>
<reference key="9">
    <citation type="journal article" date="2004" name="Mol. Cell">
        <title>A unified nomenclature for protein subunits of mediator complexes linking transcriptional regulators to RNA polymerase II.</title>
        <authorList>
            <person name="Bourbon H.-M."/>
            <person name="Aguilera A."/>
            <person name="Ansari A.Z."/>
            <person name="Asturias F.J."/>
            <person name="Berk A.J."/>
            <person name="Bjoerklund S."/>
            <person name="Blackwell T.K."/>
            <person name="Borggrefe T."/>
            <person name="Carey M."/>
            <person name="Carlson M."/>
            <person name="Conaway J.W."/>
            <person name="Conaway R.C."/>
            <person name="Emmons S.W."/>
            <person name="Fondell J.D."/>
            <person name="Freedman L.P."/>
            <person name="Fukasawa T."/>
            <person name="Gustafsson C.M."/>
            <person name="Han M."/>
            <person name="He X."/>
            <person name="Herman P.K."/>
            <person name="Hinnebusch A.G."/>
            <person name="Holmberg S."/>
            <person name="Holstege F.C.P."/>
            <person name="Jaehning J.A."/>
            <person name="Kim Y.-J."/>
            <person name="Kuras L."/>
            <person name="Leutz A."/>
            <person name="Lis J.T."/>
            <person name="Meisterernest M."/>
            <person name="Naeaer A.M."/>
            <person name="Nasmyth K."/>
            <person name="Parvin J.D."/>
            <person name="Ptashne M."/>
            <person name="Reinberg D."/>
            <person name="Ronne H."/>
            <person name="Sadowski I."/>
            <person name="Sakurai H."/>
            <person name="Sipiczki M."/>
            <person name="Sternberg P.W."/>
            <person name="Stillman D.J."/>
            <person name="Strich R."/>
            <person name="Struhl K."/>
            <person name="Svejstrup J.Q."/>
            <person name="Tuck S."/>
            <person name="Winston F."/>
            <person name="Roeder R.G."/>
            <person name="Kornberg R.D."/>
        </authorList>
    </citation>
    <scope>NOMENCLATURE</scope>
</reference>
<reference key="10">
    <citation type="journal article" date="2004" name="Mol. Cell. Biol.">
        <title>Two cyclin-dependent kinases promote RNA polymerase II transcription and formation of the scaffold complex.</title>
        <authorList>
            <person name="Liu Y."/>
            <person name="Kung C."/>
            <person name="Fishburn J."/>
            <person name="Ansari A.Z."/>
            <person name="Shokat K.M."/>
            <person name="Hahn S."/>
        </authorList>
    </citation>
    <scope>PHOSPHORYLATION BY KIN28</scope>
</reference>
<reference key="11">
    <citation type="journal article" date="2004" name="Nucleic Acids Res.">
        <title>A high resolution protein interaction map of the yeast Mediator complex.</title>
        <authorList>
            <person name="Guglielmi B."/>
            <person name="van Berkum N.L."/>
            <person name="Klapholz B."/>
            <person name="Bijma T."/>
            <person name="Boube M."/>
            <person name="Boschiero C."/>
            <person name="Bourbon H.-M."/>
            <person name="Holstege F.C.P."/>
            <person name="Werner M."/>
        </authorList>
    </citation>
    <scope>TOPOLOGY OF THE MEDIATOR COMPLEX</scope>
</reference>
<reference key="12">
    <citation type="journal article" date="2005" name="J. Biol. Chem.">
        <title>A conserved mediator hinge revealed in the structure of the MED7-MED21 (Med7-Srb7) heterodimer.</title>
        <authorList>
            <person name="Baumli S."/>
            <person name="Hoeppner S."/>
            <person name="Cramer P."/>
        </authorList>
    </citation>
    <scope>INTERACTION WITH SRB7</scope>
</reference>
<reference key="13">
    <citation type="journal article" date="2005" name="J. Biol. Chem.">
        <title>Preponderance of free mediator in the yeast Saccharomyces cerevisiae.</title>
        <authorList>
            <person name="Takagi Y."/>
            <person name="Chadick J.Z."/>
            <person name="Davis J.A."/>
            <person name="Asturias F.J."/>
        </authorList>
    </citation>
    <scope>CHARACTERIZATION OF THE MEDIATOR COMPLEX</scope>
</reference>
<reference key="14">
    <citation type="journal article" date="2005" name="J. Biol. Chem.">
        <title>Mediator and TFIIH govern carboxyl-terminal domain-dependent transcription in yeast extracts.</title>
        <authorList>
            <person name="Nair D."/>
            <person name="Kim Y."/>
            <person name="Myers L.C."/>
        </authorList>
    </citation>
    <scope>FUNCTION OF THE MEDIATOR COMPLEX</scope>
</reference>
<reference key="15">
    <citation type="journal article" date="2006" name="J. Biol. Chem.">
        <title>Mediator as a general transcription factor.</title>
        <authorList>
            <person name="Takagi Y."/>
            <person name="Kornberg R.D."/>
        </authorList>
    </citation>
    <scope>FUNCTION OF THE MEDIATOR COMPLEX</scope>
</reference>
<reference key="16">
    <citation type="journal article" date="2007" name="J. Biol. Chem.">
        <title>Med19(Rox3) regulates intermodule interactions in the Saccharomyces cerevisiae mediator complex.</title>
        <authorList>
            <person name="Baidoobonso S.M."/>
            <person name="Guidi B.W."/>
            <person name="Myers L.C."/>
        </authorList>
    </citation>
    <scope>CHARACTERIZATION OF THE MEDIATOR COMPLEX</scope>
    <scope>INTERACTION OF THE MEDIATOR COMPLEX WITH RNA POLYMERASE II</scope>
</reference>
<reference key="17">
    <citation type="journal article" date="2007" name="J. Proteome Res.">
        <title>Large-scale phosphorylation analysis of alpha-factor-arrested Saccharomyces cerevisiae.</title>
        <authorList>
            <person name="Li X."/>
            <person name="Gerber S.A."/>
            <person name="Rudner A.D."/>
            <person name="Beausoleil S.A."/>
            <person name="Haas W."/>
            <person name="Villen J."/>
            <person name="Elias J.E."/>
            <person name="Gygi S.P."/>
        </authorList>
    </citation>
    <scope>PHOSPHORYLATION [LARGE SCALE ANALYSIS] AT THR-237</scope>
    <scope>IDENTIFICATION BY MASS SPECTROMETRY [LARGE SCALE ANALYSIS]</scope>
    <source>
        <strain>ADR376</strain>
    </source>
</reference>
<reference key="18">
    <citation type="journal article" date="2007" name="Proc. Natl. Acad. Sci. U.S.A.">
        <title>Analysis of phosphorylation sites on proteins from Saccharomyces cerevisiae by electron transfer dissociation (ETD) mass spectrometry.</title>
        <authorList>
            <person name="Chi A."/>
            <person name="Huttenhower C."/>
            <person name="Geer L.Y."/>
            <person name="Coon J.J."/>
            <person name="Syka J.E.P."/>
            <person name="Bai D.L."/>
            <person name="Shabanowitz J."/>
            <person name="Burke D.J."/>
            <person name="Troyanskaya O.G."/>
            <person name="Hunt D.F."/>
        </authorList>
    </citation>
    <scope>PHOSPHORYLATION [LARGE SCALE ANALYSIS] AT THR-237 AND SER-242</scope>
    <scope>IDENTIFICATION BY MASS SPECTROMETRY [LARGE SCALE ANALYSIS]</scope>
</reference>
<reference key="19">
    <citation type="journal article" date="2008" name="Mol. Cell. Proteomics">
        <title>A multidimensional chromatography technology for in-depth phosphoproteome analysis.</title>
        <authorList>
            <person name="Albuquerque C.P."/>
            <person name="Smolka M.B."/>
            <person name="Payne S.H."/>
            <person name="Bafna V."/>
            <person name="Eng J."/>
            <person name="Zhou H."/>
        </authorList>
    </citation>
    <scope>PHOSPHORYLATION [LARGE SCALE ANALYSIS] AT SER-242</scope>
    <scope>IDENTIFICATION BY MASS SPECTROMETRY [LARGE SCALE ANALYSIS]</scope>
</reference>
<reference key="20">
    <citation type="journal article" date="2009" name="Science">
        <title>Global analysis of Cdk1 substrate phosphorylation sites provides insights into evolution.</title>
        <authorList>
            <person name="Holt L.J."/>
            <person name="Tuch B.B."/>
            <person name="Villen J."/>
            <person name="Johnson A.D."/>
            <person name="Gygi S.P."/>
            <person name="Morgan D.O."/>
        </authorList>
    </citation>
    <scope>PHOSPHORYLATION [LARGE SCALE ANALYSIS] AT THR-237</scope>
    <scope>IDENTIFICATION BY MASS SPECTROMETRY [LARGE SCALE ANALYSIS]</scope>
</reference>
<reference key="21">
    <citation type="journal article" date="2012" name="Proc. Natl. Acad. Sci. U.S.A.">
        <title>N-terminal acetylome analyses and functional insights of the N-terminal acetyltransferase NatB.</title>
        <authorList>
            <person name="Van Damme P."/>
            <person name="Lasa M."/>
            <person name="Polevoda B."/>
            <person name="Gazquez C."/>
            <person name="Elosegui-Artola A."/>
            <person name="Kim D.S."/>
            <person name="De Juan-Pardo E."/>
            <person name="Demeyer K."/>
            <person name="Hole K."/>
            <person name="Larrea E."/>
            <person name="Timmerman E."/>
            <person name="Prieto J."/>
            <person name="Arnesen T."/>
            <person name="Sherman F."/>
            <person name="Gevaert K."/>
            <person name="Aldabe R."/>
        </authorList>
    </citation>
    <scope>ACETYLATION [LARGE SCALE ANALYSIS] AT SER-2</scope>
    <scope>CLEAVAGE OF INITIATOR METHIONINE [LARGE SCALE ANALYSIS]</scope>
    <scope>IDENTIFICATION BY MASS SPECTROMETRY [LARGE SCALE ANALYSIS]</scope>
</reference>
<reference key="22">
    <citation type="journal article" date="2002" name="Mol. Cell">
        <title>Structure of the yeast RNA polymerase II holoenzyme: mediator conformation and polymerase interaction.</title>
        <authorList>
            <person name="Davis J.A."/>
            <person name="Takagi Y."/>
            <person name="Kornberg R.D."/>
            <person name="Asturias F.J."/>
        </authorList>
    </citation>
    <scope>ELECTRON MICROSCOPY OF MEDIATOR COMPLEX IN COMPLEX WITH RNA POLYMERASE II</scope>
</reference>
<dbReference type="EMBL" id="U55021">
    <property type="protein sequence ID" value="AAB47419.1"/>
    <property type="molecule type" value="Genomic_DNA"/>
</dbReference>
<dbReference type="EMBL" id="Z75082">
    <property type="protein sequence ID" value="CAA99383.1"/>
    <property type="molecule type" value="Genomic_DNA"/>
</dbReference>
<dbReference type="EMBL" id="BK006948">
    <property type="protein sequence ID" value="DAA10946.1"/>
    <property type="molecule type" value="Genomic_DNA"/>
</dbReference>
<dbReference type="PIR" id="S67062">
    <property type="entry name" value="S67062"/>
</dbReference>
<dbReference type="RefSeq" id="NP_014817.3">
    <property type="nucleotide sequence ID" value="NM_001183593.3"/>
</dbReference>
<dbReference type="PDB" id="5OQM">
    <property type="method" value="EM"/>
    <property type="resolution" value="5.80 A"/>
    <property type="chains" value="h=1-284"/>
</dbReference>
<dbReference type="PDB" id="5SVA">
    <property type="method" value="EM"/>
    <property type="resolution" value="15.30 A"/>
    <property type="chains" value="T=1-284"/>
</dbReference>
<dbReference type="PDB" id="7UI9">
    <property type="method" value="EM"/>
    <property type="resolution" value="3.30 A"/>
    <property type="chains" value="d=1-284"/>
</dbReference>
<dbReference type="PDB" id="7UIF">
    <property type="method" value="EM"/>
    <property type="resolution" value="4.60 A"/>
    <property type="chains" value="d=1-284"/>
</dbReference>
<dbReference type="PDB" id="7UIG">
    <property type="method" value="EM"/>
    <property type="resolution" value="4.30 A"/>
    <property type="chains" value="d=1-284"/>
</dbReference>
<dbReference type="PDB" id="7UIO">
    <property type="method" value="EM"/>
    <property type="resolution" value="3.30 A"/>
    <property type="chains" value="Ad/Bd=1-284"/>
</dbReference>
<dbReference type="PDB" id="8CEN">
    <property type="method" value="EM"/>
    <property type="resolution" value="3.00 A"/>
    <property type="chains" value="h=1-284"/>
</dbReference>
<dbReference type="PDB" id="8CEO">
    <property type="method" value="EM"/>
    <property type="resolution" value="3.60 A"/>
    <property type="chains" value="h=1-284"/>
</dbReference>
<dbReference type="PDBsum" id="5OQM"/>
<dbReference type="PDBsum" id="5SVA"/>
<dbReference type="PDBsum" id="7UI9"/>
<dbReference type="PDBsum" id="7UIF"/>
<dbReference type="PDBsum" id="7UIG"/>
<dbReference type="PDBsum" id="7UIO"/>
<dbReference type="PDBsum" id="8CEN"/>
<dbReference type="PDBsum" id="8CEO"/>
<dbReference type="EMDB" id="EMD-26542"/>
<dbReference type="EMDB" id="EMD-26544"/>
<dbReference type="EMDB" id="EMD-26545"/>
<dbReference type="EMDB" id="EMD-26551"/>
<dbReference type="EMDB" id="EMD-2786"/>
<dbReference type="EMDB" id="EMD-3850"/>
<dbReference type="SMR" id="Q12343"/>
<dbReference type="BioGRID" id="34568">
    <property type="interactions" value="577"/>
</dbReference>
<dbReference type="ComplexPortal" id="CPX-3226">
    <property type="entry name" value="Core mediator complex"/>
</dbReference>
<dbReference type="DIP" id="DIP-1178N"/>
<dbReference type="FunCoup" id="Q12343">
    <property type="interactions" value="326"/>
</dbReference>
<dbReference type="IntAct" id="Q12343">
    <property type="interactions" value="53"/>
</dbReference>
<dbReference type="MINT" id="Q12343"/>
<dbReference type="STRING" id="4932.YOR174W"/>
<dbReference type="iPTMnet" id="Q12343"/>
<dbReference type="PaxDb" id="4932-YOR174W"/>
<dbReference type="PeptideAtlas" id="Q12343"/>
<dbReference type="PRIDE" id="Q12343"/>
<dbReference type="EnsemblFungi" id="YOR174W_mRNA">
    <property type="protein sequence ID" value="YOR174W"/>
    <property type="gene ID" value="YOR174W"/>
</dbReference>
<dbReference type="GeneID" id="854345"/>
<dbReference type="KEGG" id="sce:YOR174W"/>
<dbReference type="AGR" id="SGD:S000005700"/>
<dbReference type="SGD" id="S000005700">
    <property type="gene designation" value="MED4"/>
</dbReference>
<dbReference type="VEuPathDB" id="FungiDB:YOR174W"/>
<dbReference type="eggNOG" id="ENOG502RXM0">
    <property type="taxonomic scope" value="Eukaryota"/>
</dbReference>
<dbReference type="HOGENOM" id="CLU_071875_0_0_1"/>
<dbReference type="InParanoid" id="Q12343"/>
<dbReference type="OMA" id="PFQIHPN"/>
<dbReference type="OrthoDB" id="1929813at2759"/>
<dbReference type="BioCyc" id="YEAST:G3O-33687-MONOMER"/>
<dbReference type="BioGRID-ORCS" id="854345">
    <property type="hits" value="2 hits in 10 CRISPR screens"/>
</dbReference>
<dbReference type="PRO" id="PR:Q12343"/>
<dbReference type="Proteomes" id="UP000002311">
    <property type="component" value="Chromosome XV"/>
</dbReference>
<dbReference type="RNAct" id="Q12343">
    <property type="molecule type" value="protein"/>
</dbReference>
<dbReference type="GO" id="GO:0070847">
    <property type="term" value="C:core mediator complex"/>
    <property type="evidence" value="ECO:0000314"/>
    <property type="project" value="SGD"/>
</dbReference>
<dbReference type="GO" id="GO:0016592">
    <property type="term" value="C:mediator complex"/>
    <property type="evidence" value="ECO:0007669"/>
    <property type="project" value="InterPro"/>
</dbReference>
<dbReference type="GO" id="GO:0005634">
    <property type="term" value="C:nucleus"/>
    <property type="evidence" value="ECO:0000314"/>
    <property type="project" value="ComplexPortal"/>
</dbReference>
<dbReference type="GO" id="GO:0000979">
    <property type="term" value="F:RNA polymerase II core promoter sequence-specific DNA binding"/>
    <property type="evidence" value="ECO:0000314"/>
    <property type="project" value="SGD"/>
</dbReference>
<dbReference type="GO" id="GO:0003712">
    <property type="term" value="F:transcription coregulator activity"/>
    <property type="evidence" value="ECO:0000318"/>
    <property type="project" value="GO_Central"/>
</dbReference>
<dbReference type="GO" id="GO:0034605">
    <property type="term" value="P:cellular response to heat"/>
    <property type="evidence" value="ECO:0000314"/>
    <property type="project" value="SGD"/>
</dbReference>
<dbReference type="GO" id="GO:0032968">
    <property type="term" value="P:positive regulation of transcription elongation by RNA polymerase II"/>
    <property type="evidence" value="ECO:0000314"/>
    <property type="project" value="ComplexPortal"/>
</dbReference>
<dbReference type="GO" id="GO:0060261">
    <property type="term" value="P:positive regulation of transcription initiation by RNA polymerase II"/>
    <property type="evidence" value="ECO:0000314"/>
    <property type="project" value="ComplexPortal"/>
</dbReference>
<dbReference type="GO" id="GO:0006357">
    <property type="term" value="P:regulation of transcription by RNA polymerase II"/>
    <property type="evidence" value="ECO:0000318"/>
    <property type="project" value="GO_Central"/>
</dbReference>
<dbReference type="GO" id="GO:0051123">
    <property type="term" value="P:RNA polymerase II preinitiation complex assembly"/>
    <property type="evidence" value="ECO:0000314"/>
    <property type="project" value="ComplexPortal"/>
</dbReference>
<dbReference type="GO" id="GO:0006366">
    <property type="term" value="P:transcription by RNA polymerase II"/>
    <property type="evidence" value="ECO:0000314"/>
    <property type="project" value="SGD"/>
</dbReference>
<dbReference type="InterPro" id="IPR019258">
    <property type="entry name" value="Mediator_Med4"/>
</dbReference>
<dbReference type="PANTHER" id="PTHR13208">
    <property type="entry name" value="MEDIATOR OF RNA POLYMERASE II TRANSCRIPTION SUBUNIT 4"/>
    <property type="match status" value="1"/>
</dbReference>
<dbReference type="PANTHER" id="PTHR13208:SF2">
    <property type="entry name" value="MEDIATOR OF RNA POLYMERASE II TRANSCRIPTION SUBUNIT 4"/>
    <property type="match status" value="1"/>
</dbReference>
<dbReference type="Pfam" id="PF10018">
    <property type="entry name" value="Med4"/>
    <property type="match status" value="1"/>
</dbReference>
<sequence>MSVQDTKAVEFSMGHIRSSSVSLVAEATSNTNSEDKLSKVQLYEDLCRYEDTLSKLVESVDRFKPNLDIAKDLIRTDEALFENVKLLAEYDNIYRNLQKIDKDSEELDSKTRKILEILNECHDELKALPMLEQVEFEKNTILQQRSKINSTELLDYATKLSKFTKIPPTFDKGAVGPNNFIWPAEDALRRGMLAMASLHSKELTRIPGEEVEETEVPTVPPSQSEEQKGQMAKKEGTPKTDSFIFDGTAKEVGDEADNTKDKEKEENNDDALDLDLDLFDPDDF</sequence>
<gene>
    <name type="primary">MED4</name>
    <name type="ordered locus">YOR174W</name>
    <name type="ORF">O3630</name>
</gene>
<name>MED4_YEAST</name>
<proteinExistence type="evidence at protein level"/>
<keyword id="KW-0002">3D-structure</keyword>
<keyword id="KW-0007">Acetylation</keyword>
<keyword id="KW-0010">Activator</keyword>
<keyword id="KW-0539">Nucleus</keyword>
<keyword id="KW-0597">Phosphoprotein</keyword>
<keyword id="KW-1185">Reference proteome</keyword>
<keyword id="KW-0804">Transcription</keyword>
<keyword id="KW-0805">Transcription regulation</keyword>
<organism>
    <name type="scientific">Saccharomyces cerevisiae (strain ATCC 204508 / S288c)</name>
    <name type="common">Baker's yeast</name>
    <dbReference type="NCBI Taxonomy" id="559292"/>
    <lineage>
        <taxon>Eukaryota</taxon>
        <taxon>Fungi</taxon>
        <taxon>Dikarya</taxon>
        <taxon>Ascomycota</taxon>
        <taxon>Saccharomycotina</taxon>
        <taxon>Saccharomycetes</taxon>
        <taxon>Saccharomycetales</taxon>
        <taxon>Saccharomycetaceae</taxon>
        <taxon>Saccharomyces</taxon>
    </lineage>
</organism>
<accession>Q12343</accession>
<accession>D6W2N0</accession>